<accession>D4AT77</accession>
<evidence type="ECO:0000250" key="1">
    <source>
        <dbReference type="UniProtKB" id="P20004"/>
    </source>
</evidence>
<evidence type="ECO:0000255" key="2"/>
<evidence type="ECO:0000255" key="3">
    <source>
        <dbReference type="PROSITE-ProRule" id="PRU00498"/>
    </source>
</evidence>
<evidence type="ECO:0000305" key="4"/>
<dbReference type="EC" id="4.2.1.3" evidence="1"/>
<dbReference type="EMBL" id="ABSU01000009">
    <property type="protein sequence ID" value="EFE33496.1"/>
    <property type="molecule type" value="Genomic_DNA"/>
</dbReference>
<dbReference type="RefSeq" id="XP_003014136.1">
    <property type="nucleotide sequence ID" value="XM_003014090.1"/>
</dbReference>
<dbReference type="SMR" id="D4AT77"/>
<dbReference type="STRING" id="663331.D4AT77"/>
<dbReference type="GeneID" id="9521551"/>
<dbReference type="KEGG" id="abe:ARB_07441"/>
<dbReference type="eggNOG" id="KOG0453">
    <property type="taxonomic scope" value="Eukaryota"/>
</dbReference>
<dbReference type="HOGENOM" id="CLU_006714_2_2_1"/>
<dbReference type="OMA" id="KKQGMLG"/>
<dbReference type="UniPathway" id="UPA00223">
    <property type="reaction ID" value="UER00718"/>
</dbReference>
<dbReference type="Proteomes" id="UP000008866">
    <property type="component" value="Unassembled WGS sequence"/>
</dbReference>
<dbReference type="GO" id="GO:0005829">
    <property type="term" value="C:cytosol"/>
    <property type="evidence" value="ECO:0007669"/>
    <property type="project" value="TreeGrafter"/>
</dbReference>
<dbReference type="GO" id="GO:0005739">
    <property type="term" value="C:mitochondrion"/>
    <property type="evidence" value="ECO:0007669"/>
    <property type="project" value="UniProtKB-SubCell"/>
</dbReference>
<dbReference type="GO" id="GO:0051539">
    <property type="term" value="F:4 iron, 4 sulfur cluster binding"/>
    <property type="evidence" value="ECO:0007669"/>
    <property type="project" value="UniProtKB-KW"/>
</dbReference>
<dbReference type="GO" id="GO:0003994">
    <property type="term" value="F:aconitate hydratase activity"/>
    <property type="evidence" value="ECO:0007669"/>
    <property type="project" value="UniProtKB-EC"/>
</dbReference>
<dbReference type="GO" id="GO:0046872">
    <property type="term" value="F:metal ion binding"/>
    <property type="evidence" value="ECO:0007669"/>
    <property type="project" value="UniProtKB-KW"/>
</dbReference>
<dbReference type="GO" id="GO:0006099">
    <property type="term" value="P:tricarboxylic acid cycle"/>
    <property type="evidence" value="ECO:0007669"/>
    <property type="project" value="UniProtKB-UniPathway"/>
</dbReference>
<dbReference type="CDD" id="cd01584">
    <property type="entry name" value="AcnA_Mitochondrial"/>
    <property type="match status" value="1"/>
</dbReference>
<dbReference type="FunFam" id="3.20.19.10:FF:000002">
    <property type="entry name" value="Aconitate hydratase, mitochondrial"/>
    <property type="match status" value="1"/>
</dbReference>
<dbReference type="FunFam" id="3.30.499.10:FF:000003">
    <property type="entry name" value="Aconitate hydratase, mitochondrial"/>
    <property type="match status" value="1"/>
</dbReference>
<dbReference type="FunFam" id="3.30.499.10:FF:000004">
    <property type="entry name" value="Aconitate hydratase, mitochondrial"/>
    <property type="match status" value="1"/>
</dbReference>
<dbReference type="FunFam" id="3.40.1060.10:FF:000001">
    <property type="entry name" value="Aconitate hydratase, mitochondrial"/>
    <property type="match status" value="1"/>
</dbReference>
<dbReference type="Gene3D" id="3.40.1060.10">
    <property type="entry name" value="Aconitase, Domain 2"/>
    <property type="match status" value="1"/>
</dbReference>
<dbReference type="Gene3D" id="3.30.499.10">
    <property type="entry name" value="Aconitase, domain 3"/>
    <property type="match status" value="2"/>
</dbReference>
<dbReference type="Gene3D" id="3.20.19.10">
    <property type="entry name" value="Aconitase, domain 4"/>
    <property type="match status" value="1"/>
</dbReference>
<dbReference type="InterPro" id="IPR015931">
    <property type="entry name" value="Acnase/IPM_dHydase_lsu_aba_1/3"/>
</dbReference>
<dbReference type="InterPro" id="IPR001030">
    <property type="entry name" value="Acoase/IPM_deHydtase_lsu_aba"/>
</dbReference>
<dbReference type="InterPro" id="IPR015928">
    <property type="entry name" value="Aconitase/3IPM_dehydase_swvl"/>
</dbReference>
<dbReference type="InterPro" id="IPR050926">
    <property type="entry name" value="Aconitase/IPM_isomerase"/>
</dbReference>
<dbReference type="InterPro" id="IPR018136">
    <property type="entry name" value="Aconitase_4Fe-4S_BS"/>
</dbReference>
<dbReference type="InterPro" id="IPR036008">
    <property type="entry name" value="Aconitase_4Fe-4S_dom"/>
</dbReference>
<dbReference type="InterPro" id="IPR015932">
    <property type="entry name" value="Aconitase_dom2"/>
</dbReference>
<dbReference type="InterPro" id="IPR006248">
    <property type="entry name" value="Aconitase_mito-like"/>
</dbReference>
<dbReference type="InterPro" id="IPR000573">
    <property type="entry name" value="AconitaseA/IPMdHydase_ssu_swvl"/>
</dbReference>
<dbReference type="NCBIfam" id="TIGR01340">
    <property type="entry name" value="aconitase_mito"/>
    <property type="match status" value="1"/>
</dbReference>
<dbReference type="NCBIfam" id="NF005558">
    <property type="entry name" value="PRK07229.1"/>
    <property type="match status" value="1"/>
</dbReference>
<dbReference type="PANTHER" id="PTHR43160">
    <property type="entry name" value="ACONITATE HYDRATASE B"/>
    <property type="match status" value="1"/>
</dbReference>
<dbReference type="PANTHER" id="PTHR43160:SF3">
    <property type="entry name" value="ACONITATE HYDRATASE, MITOCHONDRIAL"/>
    <property type="match status" value="1"/>
</dbReference>
<dbReference type="Pfam" id="PF00330">
    <property type="entry name" value="Aconitase"/>
    <property type="match status" value="1"/>
</dbReference>
<dbReference type="Pfam" id="PF00694">
    <property type="entry name" value="Aconitase_C"/>
    <property type="match status" value="1"/>
</dbReference>
<dbReference type="PRINTS" id="PR00415">
    <property type="entry name" value="ACONITASE"/>
</dbReference>
<dbReference type="SUPFAM" id="SSF53732">
    <property type="entry name" value="Aconitase iron-sulfur domain"/>
    <property type="match status" value="1"/>
</dbReference>
<dbReference type="SUPFAM" id="SSF52016">
    <property type="entry name" value="LeuD/IlvD-like"/>
    <property type="match status" value="1"/>
</dbReference>
<dbReference type="PROSITE" id="PS00450">
    <property type="entry name" value="ACONITASE_1"/>
    <property type="match status" value="1"/>
</dbReference>
<dbReference type="PROSITE" id="PS01244">
    <property type="entry name" value="ACONITASE_2"/>
    <property type="match status" value="1"/>
</dbReference>
<protein>
    <recommendedName>
        <fullName evidence="1">Aconitate hydratase, mitochondrial</fullName>
        <shortName evidence="1">Aconitase</shortName>
        <ecNumber evidence="1">4.2.1.3</ecNumber>
    </recommendedName>
    <alternativeName>
        <fullName evidence="1">Citrate hydro-lyase</fullName>
    </alternativeName>
</protein>
<comment type="function">
    <text evidence="1">Catalyzes the isomerization of citrate to isocitrate via cis-aconitate.</text>
</comment>
<comment type="catalytic activity">
    <reaction evidence="1">
        <text>citrate = D-threo-isocitrate</text>
        <dbReference type="Rhea" id="RHEA:10336"/>
        <dbReference type="ChEBI" id="CHEBI:15562"/>
        <dbReference type="ChEBI" id="CHEBI:16947"/>
        <dbReference type="EC" id="4.2.1.3"/>
    </reaction>
</comment>
<comment type="cofactor">
    <cofactor evidence="1">
        <name>[4Fe-4S] cluster</name>
        <dbReference type="ChEBI" id="CHEBI:49883"/>
    </cofactor>
    <text evidence="1">Binds 1 [4Fe-4S] cluster per subunit. Binding of a [3Fe-4S] cluster leads to an inactive enzyme.</text>
</comment>
<comment type="pathway">
    <text evidence="1">Carbohydrate metabolism; tricarboxylic acid cycle; isocitrate from oxaloacetate: step 2/2.</text>
</comment>
<comment type="subunit">
    <text evidence="1">Monomer.</text>
</comment>
<comment type="subcellular location">
    <subcellularLocation>
        <location evidence="1">Mitochondrion</location>
    </subcellularLocation>
</comment>
<comment type="similarity">
    <text evidence="4">Belongs to the aconitase/IPM isomerase family.</text>
</comment>
<sequence>MLTTLARASAMLLGARGFASAADLDKKVEMTNWEKGNYINYKKMAENLDIVRARLNRPLTFAEKILYSHLDDPHGQEIERGKSYLKLRPDRVACQDATAQMAILQFMSAGMPSVATPATVHCDHLIEAQLGGDKDLARANEINKEVYDFLSTSCAKYNIGFWKPGSGIIHQILLENYCFPGGLMIGTDSHTPNGGGLGMAAIGVGGADAVDVMAGLPWELKAPNVIGVKLTGQMSGWTAPKDIILKVAGILTVKGGTGAIIEYHGDGVNSLSCTGMGTICNMGAEIGATTSVFPFNDRMYDYLKATKRQSIGDFSRVYAEGLRPDENAQYDQLIEINLSELEPHINGPFTPDLATPISKFKEAVKENNWPSELKVGLIGSCTNSSYEDMSRAASIARDALNHGIKAKSLFTVTPGSEQIRATIERDGQLKTLEEFGGVILANACGPCIGQWDRKDVKKNEANSIISSYNRNFTGRNDANPATHAFVTSPDLVVALTIAGTLNFNPLTDKLKDKDGNEFMLAPPTGEGLPANGYDPGRDTYQAPPADRASISVAVSPSSDRLQILEPFKAWDGKDAKGIPILIKCEGKTTTDHISMAGPWLKYRGHLDNISNNLLIGAVNAENGERNSVKNFETGEYDSVPATARAYKARGIPWVVIGDWNYGEGSSREHAALQPRHLGGMAIITRSFARIHETNLKKQGMLPLTFADPADYDRIPPTAMVDLMCTELAVGKPMTLRVHPKDGASFDVKLSHTFNESQIEWFKNGSALNTMAKKAQ</sequence>
<proteinExistence type="evidence at protein level"/>
<feature type="transit peptide" description="Mitochondrion" evidence="2">
    <location>
        <begin position="1"/>
        <end position="25"/>
    </location>
</feature>
<feature type="chain" id="PRO_0000434923" description="Aconitate hydratase, mitochondrial">
    <location>
        <begin position="26"/>
        <end position="775"/>
    </location>
</feature>
<feature type="binding site" evidence="1">
    <location>
        <position position="95"/>
    </location>
    <ligand>
        <name>substrate</name>
    </ligand>
</feature>
<feature type="binding site" evidence="1">
    <location>
        <begin position="188"/>
        <end position="190"/>
    </location>
    <ligand>
        <name>substrate</name>
    </ligand>
</feature>
<feature type="binding site" evidence="1">
    <location>
        <position position="381"/>
    </location>
    <ligand>
        <name>[4Fe-4S] cluster</name>
        <dbReference type="ChEBI" id="CHEBI:49883"/>
    </ligand>
</feature>
<feature type="binding site" evidence="1">
    <location>
        <position position="444"/>
    </location>
    <ligand>
        <name>[4Fe-4S] cluster</name>
        <dbReference type="ChEBI" id="CHEBI:49883"/>
    </ligand>
</feature>
<feature type="binding site" evidence="1">
    <location>
        <position position="447"/>
    </location>
    <ligand>
        <name>[4Fe-4S] cluster</name>
        <dbReference type="ChEBI" id="CHEBI:49883"/>
    </ligand>
</feature>
<feature type="binding site" evidence="1">
    <location>
        <position position="470"/>
    </location>
    <ligand>
        <name>substrate</name>
    </ligand>
</feature>
<feature type="binding site" evidence="1">
    <location>
        <position position="475"/>
    </location>
    <ligand>
        <name>substrate</name>
    </ligand>
</feature>
<feature type="binding site" evidence="1">
    <location>
        <position position="603"/>
    </location>
    <ligand>
        <name>substrate</name>
    </ligand>
</feature>
<feature type="binding site" evidence="1">
    <location>
        <begin position="666"/>
        <end position="667"/>
    </location>
    <ligand>
        <name>substrate</name>
    </ligand>
</feature>
<feature type="glycosylation site" description="N-linked (GlcNAc...) asparagine" evidence="3">
    <location>
        <position position="337"/>
    </location>
</feature>
<feature type="glycosylation site" description="N-linked (GlcNAc...) asparagine" evidence="3">
    <location>
        <position position="383"/>
    </location>
</feature>
<feature type="glycosylation site" description="N-linked (GlcNAc...) asparagine" evidence="3">
    <location>
        <position position="471"/>
    </location>
</feature>
<feature type="glycosylation site" description="N-linked (GlcNAc...) asparagine" evidence="3">
    <location>
        <position position="608"/>
    </location>
</feature>
<feature type="glycosylation site" description="N-linked (GlcNAc...) asparagine" evidence="3">
    <location>
        <position position="754"/>
    </location>
</feature>
<feature type="glycosylation site" description="N-linked (GlcNAc...) asparagine" evidence="3">
    <location>
        <position position="763"/>
    </location>
</feature>
<reference key="1">
    <citation type="journal article" date="2011" name="Genome Biol.">
        <title>Comparative and functional genomics provide insights into the pathogenicity of dermatophytic fungi.</title>
        <authorList>
            <person name="Burmester A."/>
            <person name="Shelest E."/>
            <person name="Gloeckner G."/>
            <person name="Heddergott C."/>
            <person name="Schindler S."/>
            <person name="Staib P."/>
            <person name="Heidel A."/>
            <person name="Felder M."/>
            <person name="Petzold A."/>
            <person name="Szafranski K."/>
            <person name="Feuermann M."/>
            <person name="Pedruzzi I."/>
            <person name="Priebe S."/>
            <person name="Groth M."/>
            <person name="Winkler R."/>
            <person name="Li W."/>
            <person name="Kniemeyer O."/>
            <person name="Schroeckh V."/>
            <person name="Hertweck C."/>
            <person name="Hube B."/>
            <person name="White T.C."/>
            <person name="Platzer M."/>
            <person name="Guthke R."/>
            <person name="Heitman J."/>
            <person name="Woestemeyer J."/>
            <person name="Zipfel P.F."/>
            <person name="Monod M."/>
            <person name="Brakhage A.A."/>
        </authorList>
    </citation>
    <scope>NUCLEOTIDE SEQUENCE [LARGE SCALE GENOMIC DNA]</scope>
    <source>
        <strain>ATCC MYA-4681 / CBS 112371</strain>
    </source>
</reference>
<reference key="2">
    <citation type="journal article" date="2011" name="Proteomics">
        <title>Identification of novel secreted proteases during extracellular proteolysis by dermatophytes at acidic pH.</title>
        <authorList>
            <person name="Sriranganadane D."/>
            <person name="Waridel P."/>
            <person name="Salamin K."/>
            <person name="Feuermann M."/>
            <person name="Mignon B."/>
            <person name="Staib P."/>
            <person name="Neuhaus J.M."/>
            <person name="Quadroni M."/>
            <person name="Monod M."/>
        </authorList>
    </citation>
    <scope>IDENTIFICATION BY MASS SPECTROMETRY</scope>
</reference>
<organism>
    <name type="scientific">Arthroderma benhamiae (strain ATCC MYA-4681 / CBS 112371)</name>
    <name type="common">Trichophyton mentagrophytes</name>
    <dbReference type="NCBI Taxonomy" id="663331"/>
    <lineage>
        <taxon>Eukaryota</taxon>
        <taxon>Fungi</taxon>
        <taxon>Dikarya</taxon>
        <taxon>Ascomycota</taxon>
        <taxon>Pezizomycotina</taxon>
        <taxon>Eurotiomycetes</taxon>
        <taxon>Eurotiomycetidae</taxon>
        <taxon>Onygenales</taxon>
        <taxon>Arthrodermataceae</taxon>
        <taxon>Trichophyton</taxon>
    </lineage>
</organism>
<gene>
    <name type="ORF">ARB_07441</name>
</gene>
<name>ACON_ARTBC</name>
<keyword id="KW-0004">4Fe-4S</keyword>
<keyword id="KW-0325">Glycoprotein</keyword>
<keyword id="KW-0408">Iron</keyword>
<keyword id="KW-0411">Iron-sulfur</keyword>
<keyword id="KW-0456">Lyase</keyword>
<keyword id="KW-0479">Metal-binding</keyword>
<keyword id="KW-0496">Mitochondrion</keyword>
<keyword id="KW-1185">Reference proteome</keyword>
<keyword id="KW-0809">Transit peptide</keyword>
<keyword id="KW-0816">Tricarboxylic acid cycle</keyword>